<name>RL1_THEVB</name>
<accession>Q8DM27</accession>
<comment type="function">
    <text evidence="1">Binds directly to 23S rRNA. The L1 stalk is quite mobile in the ribosome, and is involved in E site tRNA release.</text>
</comment>
<comment type="function">
    <text evidence="1">Protein L1 is also a translational repressor protein, it controls the translation of the L11 operon by binding to its mRNA.</text>
</comment>
<comment type="subunit">
    <text evidence="1">Part of the 50S ribosomal subunit.</text>
</comment>
<comment type="similarity">
    <text evidence="1">Belongs to the universal ribosomal protein uL1 family.</text>
</comment>
<proteinExistence type="inferred from homology"/>
<evidence type="ECO:0000255" key="1">
    <source>
        <dbReference type="HAMAP-Rule" id="MF_01318"/>
    </source>
</evidence>
<evidence type="ECO:0000305" key="2"/>
<dbReference type="EMBL" id="BA000039">
    <property type="protein sequence ID" value="BAC07849.1"/>
    <property type="molecule type" value="Genomic_DNA"/>
</dbReference>
<dbReference type="RefSeq" id="NP_681087.1">
    <property type="nucleotide sequence ID" value="NC_004113.1"/>
</dbReference>
<dbReference type="SMR" id="Q8DM27"/>
<dbReference type="STRING" id="197221.gene:10746879"/>
<dbReference type="EnsemblBacteria" id="BAC07849">
    <property type="protein sequence ID" value="BAC07849"/>
    <property type="gene ID" value="BAC07849"/>
</dbReference>
<dbReference type="KEGG" id="tel:tlr0296"/>
<dbReference type="PATRIC" id="fig|197221.4.peg.310"/>
<dbReference type="eggNOG" id="COG0081">
    <property type="taxonomic scope" value="Bacteria"/>
</dbReference>
<dbReference type="Proteomes" id="UP000000440">
    <property type="component" value="Chromosome"/>
</dbReference>
<dbReference type="GO" id="GO:0015934">
    <property type="term" value="C:large ribosomal subunit"/>
    <property type="evidence" value="ECO:0007669"/>
    <property type="project" value="InterPro"/>
</dbReference>
<dbReference type="GO" id="GO:0019843">
    <property type="term" value="F:rRNA binding"/>
    <property type="evidence" value="ECO:0007669"/>
    <property type="project" value="UniProtKB-UniRule"/>
</dbReference>
<dbReference type="GO" id="GO:0003735">
    <property type="term" value="F:structural constituent of ribosome"/>
    <property type="evidence" value="ECO:0007669"/>
    <property type="project" value="InterPro"/>
</dbReference>
<dbReference type="GO" id="GO:0000049">
    <property type="term" value="F:tRNA binding"/>
    <property type="evidence" value="ECO:0007669"/>
    <property type="project" value="UniProtKB-KW"/>
</dbReference>
<dbReference type="GO" id="GO:0006417">
    <property type="term" value="P:regulation of translation"/>
    <property type="evidence" value="ECO:0007669"/>
    <property type="project" value="UniProtKB-KW"/>
</dbReference>
<dbReference type="GO" id="GO:0006412">
    <property type="term" value="P:translation"/>
    <property type="evidence" value="ECO:0007669"/>
    <property type="project" value="UniProtKB-UniRule"/>
</dbReference>
<dbReference type="CDD" id="cd00403">
    <property type="entry name" value="Ribosomal_L1"/>
    <property type="match status" value="1"/>
</dbReference>
<dbReference type="FunFam" id="3.40.50.790:FF:000001">
    <property type="entry name" value="50S ribosomal protein L1"/>
    <property type="match status" value="1"/>
</dbReference>
<dbReference type="Gene3D" id="3.30.190.20">
    <property type="match status" value="1"/>
</dbReference>
<dbReference type="Gene3D" id="3.40.50.790">
    <property type="match status" value="1"/>
</dbReference>
<dbReference type="HAMAP" id="MF_01318_B">
    <property type="entry name" value="Ribosomal_uL1_B"/>
    <property type="match status" value="1"/>
</dbReference>
<dbReference type="InterPro" id="IPR005878">
    <property type="entry name" value="Ribosom_uL1_bac-type"/>
</dbReference>
<dbReference type="InterPro" id="IPR002143">
    <property type="entry name" value="Ribosomal_uL1"/>
</dbReference>
<dbReference type="InterPro" id="IPR023674">
    <property type="entry name" value="Ribosomal_uL1-like"/>
</dbReference>
<dbReference type="InterPro" id="IPR028364">
    <property type="entry name" value="Ribosomal_uL1/biogenesis"/>
</dbReference>
<dbReference type="InterPro" id="IPR016095">
    <property type="entry name" value="Ribosomal_uL1_3-a/b-sand"/>
</dbReference>
<dbReference type="InterPro" id="IPR023673">
    <property type="entry name" value="Ribosomal_uL1_CS"/>
</dbReference>
<dbReference type="NCBIfam" id="TIGR01169">
    <property type="entry name" value="rplA_bact"/>
    <property type="match status" value="1"/>
</dbReference>
<dbReference type="PANTHER" id="PTHR36427">
    <property type="entry name" value="54S RIBOSOMAL PROTEIN L1, MITOCHONDRIAL"/>
    <property type="match status" value="1"/>
</dbReference>
<dbReference type="PANTHER" id="PTHR36427:SF3">
    <property type="entry name" value="LARGE RIBOSOMAL SUBUNIT PROTEIN UL1M"/>
    <property type="match status" value="1"/>
</dbReference>
<dbReference type="Pfam" id="PF00687">
    <property type="entry name" value="Ribosomal_L1"/>
    <property type="match status" value="1"/>
</dbReference>
<dbReference type="PIRSF" id="PIRSF002155">
    <property type="entry name" value="Ribosomal_L1"/>
    <property type="match status" value="1"/>
</dbReference>
<dbReference type="SUPFAM" id="SSF56808">
    <property type="entry name" value="Ribosomal protein L1"/>
    <property type="match status" value="1"/>
</dbReference>
<dbReference type="PROSITE" id="PS01199">
    <property type="entry name" value="RIBOSOMAL_L1"/>
    <property type="match status" value="1"/>
</dbReference>
<feature type="chain" id="PRO_0000125758" description="Large ribosomal subunit protein uL1">
    <location>
        <begin position="1"/>
        <end position="237"/>
    </location>
</feature>
<reference key="1">
    <citation type="journal article" date="2002" name="DNA Res.">
        <title>Complete genome structure of the thermophilic cyanobacterium Thermosynechococcus elongatus BP-1.</title>
        <authorList>
            <person name="Nakamura Y."/>
            <person name="Kaneko T."/>
            <person name="Sato S."/>
            <person name="Ikeuchi M."/>
            <person name="Katoh H."/>
            <person name="Sasamoto S."/>
            <person name="Watanabe A."/>
            <person name="Iriguchi M."/>
            <person name="Kawashima K."/>
            <person name="Kimura T."/>
            <person name="Kishida Y."/>
            <person name="Kiyokawa C."/>
            <person name="Kohara M."/>
            <person name="Matsumoto M."/>
            <person name="Matsuno A."/>
            <person name="Nakazaki N."/>
            <person name="Shimpo S."/>
            <person name="Sugimoto M."/>
            <person name="Takeuchi C."/>
            <person name="Yamada M."/>
            <person name="Tabata S."/>
        </authorList>
    </citation>
    <scope>NUCLEOTIDE SEQUENCE [LARGE SCALE GENOMIC DNA]</scope>
    <source>
        <strain>NIES-2133 / IAM M-273 / BP-1</strain>
    </source>
</reference>
<keyword id="KW-1185">Reference proteome</keyword>
<keyword id="KW-0678">Repressor</keyword>
<keyword id="KW-0687">Ribonucleoprotein</keyword>
<keyword id="KW-0689">Ribosomal protein</keyword>
<keyword id="KW-0694">RNA-binding</keyword>
<keyword id="KW-0699">rRNA-binding</keyword>
<keyword id="KW-0810">Translation regulation</keyword>
<keyword id="KW-0820">tRNA-binding</keyword>
<sequence length="237" mass="25940">MRKLSRRLRELYAKVEDRPYAPLEALQLLKETATAKFPESAEAHIRLGIDPKYTDQQLRTTVALPKGTGQTIRVAVIARGEKVTEASAAGADVVGSEELIDEIQKGRMDFDLLIATPDMMPQVAKVGRILGPRGLMPSPKAGTVTFDLPQAIQEFKAGKVEFRADRSGIVHVLFGKASFSAEDLLVNLKALQESIDRNRPSGAKGRYWRSVYVAATMGPSIQVDINALRELKLAEAA</sequence>
<protein>
    <recommendedName>
        <fullName evidence="1">Large ribosomal subunit protein uL1</fullName>
    </recommendedName>
    <alternativeName>
        <fullName evidence="2">50S ribosomal protein L1</fullName>
    </alternativeName>
</protein>
<organism>
    <name type="scientific">Thermosynechococcus vestitus (strain NIES-2133 / IAM M-273 / BP-1)</name>
    <dbReference type="NCBI Taxonomy" id="197221"/>
    <lineage>
        <taxon>Bacteria</taxon>
        <taxon>Bacillati</taxon>
        <taxon>Cyanobacteriota</taxon>
        <taxon>Cyanophyceae</taxon>
        <taxon>Acaryochloridales</taxon>
        <taxon>Thermosynechococcaceae</taxon>
        <taxon>Thermosynechococcus</taxon>
    </lineage>
</organism>
<gene>
    <name evidence="1" type="primary">rplA</name>
    <name evidence="1" type="synonym">rpl1</name>
    <name type="ordered locus">tlr0296</name>
</gene>